<accession>Q03271</accession>
<organism>
    <name type="scientific">Nasonia vitripennis</name>
    <name type="common">Parasitic wasp</name>
    <dbReference type="NCBI Taxonomy" id="7425"/>
    <lineage>
        <taxon>Eukaryota</taxon>
        <taxon>Metazoa</taxon>
        <taxon>Ecdysozoa</taxon>
        <taxon>Arthropoda</taxon>
        <taxon>Hexapoda</taxon>
        <taxon>Insecta</taxon>
        <taxon>Pterygota</taxon>
        <taxon>Neoptera</taxon>
        <taxon>Endopterygota</taxon>
        <taxon>Hymenoptera</taxon>
        <taxon>Apocrita</taxon>
        <taxon>Proctotrupomorpha</taxon>
        <taxon>Chalcidoidea</taxon>
        <taxon>Pteromalidae</taxon>
        <taxon>Pteromalinae</taxon>
        <taxon>Nasonia</taxon>
    </lineage>
</organism>
<sequence>VDAFADDLLLLVQGNRRNELEQSASEALSVVYRYGTNIGVEVSDSKTVCMMLKGSLNMLNRVVHVSTNGMDDKRIRCVDRVRYLGVNVGIGMDFSVHIDGMKRRLTTAIMRLRGVLRKSWGLKRGVVSMVVKGLFLPAVMYGASVWYEQLHKRKLRGSRRLSEELVSCQRVVLYACTRVCRTVSTEAMQILFGSLPWDIECFRRANCTKSKGPAMNESDLVTDEDLYELSLHECRELVDQRALAAWQDRWEATSNGRVTYEWIRDVGFSGRSMKYFGAEPEGLLRLTGHGSMNSFLFSRNLSNSPACACGTEREDWIHVLCECDMYAAFRDLDSIGVRRTEVGWDVSGVLLDRASMSVCVPLSSCAFRMRELIVQRMRENEES</sequence>
<name>PO13_NASVI</name>
<keyword id="KW-0255">Endonuclease</keyword>
<keyword id="KW-0378">Hydrolase</keyword>
<keyword id="KW-0540">Nuclease</keyword>
<keyword id="KW-0548">Nucleotidyltransferase</keyword>
<keyword id="KW-1185">Reference proteome</keyword>
<keyword id="KW-0695">RNA-directed DNA polymerase</keyword>
<keyword id="KW-0808">Transferase</keyword>
<keyword id="KW-0814">Transposable element</keyword>
<reference key="1">
    <citation type="journal article" date="1993" name="Mol. Biol. Evol.">
        <title>Sequence relationship of retrotransposable elements R1 and R2 within and between divergent insect species.</title>
        <authorList>
            <person name="Burke W.D."/>
            <person name="Eickbush D.G."/>
            <person name="Xiong Y."/>
            <person name="Jakubczak J.L."/>
            <person name="Eickbush T.H."/>
        </authorList>
    </citation>
    <scope>NUCLEOTIDE SEQUENCE [GENOMIC DNA]</scope>
</reference>
<reference key="2">
    <citation type="journal article" date="1991" name="Proc. Natl. Acad. Sci. U.S.A.">
        <title>Retrotransposable elements R1 and R2 interrupt the rRNA genes of most insects.</title>
        <authorList>
            <person name="Jakubczak J.L."/>
            <person name="Burke W.D."/>
            <person name="Eickbush T.H."/>
        </authorList>
    </citation>
    <scope>NUCLEOTIDE SEQUENCE [GENOMIC DNA] OF 307-323</scope>
</reference>
<dbReference type="EC" id="2.7.7.49"/>
<dbReference type="EMBL" id="L00942">
    <property type="protein sequence ID" value="AAA30339.1"/>
    <property type="molecule type" value="Genomic_DNA"/>
</dbReference>
<dbReference type="PIR" id="D44490">
    <property type="entry name" value="D44490"/>
</dbReference>
<dbReference type="InParanoid" id="Q03271"/>
<dbReference type="Proteomes" id="UP000002358">
    <property type="component" value="Unplaced"/>
</dbReference>
<dbReference type="GO" id="GO:0004519">
    <property type="term" value="F:endonuclease activity"/>
    <property type="evidence" value="ECO:0007669"/>
    <property type="project" value="UniProtKB-KW"/>
</dbReference>
<dbReference type="GO" id="GO:0003964">
    <property type="term" value="F:RNA-directed DNA polymerase activity"/>
    <property type="evidence" value="ECO:0007669"/>
    <property type="project" value="UniProtKB-KW"/>
</dbReference>
<dbReference type="InterPro" id="IPR000477">
    <property type="entry name" value="RT_dom"/>
</dbReference>
<dbReference type="PANTHER" id="PTHR37557">
    <property type="entry name" value="115 KDA PROTEIN IN TYPE-1 RETROTRANSPOSABLE ELEMENT R1DM-LIKE PROTEIN-RELATED-RELATED"/>
    <property type="match status" value="1"/>
</dbReference>
<dbReference type="PANTHER" id="PTHR37557:SF4">
    <property type="entry name" value="CCHC-TYPE DOMAIN-CONTAINING PROTEIN"/>
    <property type="match status" value="1"/>
</dbReference>
<dbReference type="PROSITE" id="PS50878">
    <property type="entry name" value="RT_POL"/>
    <property type="match status" value="1"/>
</dbReference>
<proteinExistence type="predicted"/>
<feature type="chain" id="PRO_0000058495" description="Retrovirus-related Pol polyprotein from type-1 retrotransposable element R1 3">
    <location>
        <begin position="1" status="less than"/>
        <end position="383"/>
    </location>
</feature>
<feature type="domain" description="Reverse transcriptase" evidence="1">
    <location>
        <begin position="1" status="less than"/>
        <end position="88"/>
    </location>
</feature>
<feature type="region of interest" description="Nucleic acid-binding endonuclease">
    <location>
        <begin position="229"/>
        <end position="383"/>
    </location>
</feature>
<feature type="non-terminal residue">
    <location>
        <position position="1"/>
    </location>
</feature>
<evidence type="ECO:0000255" key="1">
    <source>
        <dbReference type="PROSITE-ProRule" id="PRU00405"/>
    </source>
</evidence>
<protein>
    <recommendedName>
        <fullName>Retrovirus-related Pol polyprotein from type-1 retrotransposable element R1 3</fullName>
    </recommendedName>
    <alternativeName>
        <fullName>Retrovirus-related Pol polyprotein from type I retrotransposable element R1 3</fullName>
    </alternativeName>
    <domain>
        <recommendedName>
            <fullName>Reverse transcriptase</fullName>
            <ecNumber>2.7.7.49</ecNumber>
        </recommendedName>
    </domain>
    <domain>
        <recommendedName>
            <fullName>Endonuclease</fullName>
        </recommendedName>
    </domain>
</protein>
<comment type="catalytic activity">
    <reaction evidence="1">
        <text>DNA(n) + a 2'-deoxyribonucleoside 5'-triphosphate = DNA(n+1) + diphosphate</text>
        <dbReference type="Rhea" id="RHEA:22508"/>
        <dbReference type="Rhea" id="RHEA-COMP:17339"/>
        <dbReference type="Rhea" id="RHEA-COMP:17340"/>
        <dbReference type="ChEBI" id="CHEBI:33019"/>
        <dbReference type="ChEBI" id="CHEBI:61560"/>
        <dbReference type="ChEBI" id="CHEBI:173112"/>
        <dbReference type="EC" id="2.7.7.49"/>
    </reaction>
</comment>